<dbReference type="EMBL" id="AF093821">
    <property type="protein sequence ID" value="AAC62511.1"/>
    <property type="molecule type" value="mRNA"/>
</dbReference>
<dbReference type="EMBL" id="AB035725">
    <property type="protein sequence ID" value="BAA88342.1"/>
    <property type="molecule type" value="mRNA"/>
</dbReference>
<dbReference type="EMBL" id="AK034845">
    <property type="protein sequence ID" value="BAC28852.1"/>
    <property type="molecule type" value="mRNA"/>
</dbReference>
<dbReference type="EMBL" id="AK077588">
    <property type="protein sequence ID" value="BAC36880.1"/>
    <property type="molecule type" value="mRNA"/>
</dbReference>
<dbReference type="EMBL" id="AK078158">
    <property type="protein sequence ID" value="BAC37152.1"/>
    <property type="molecule type" value="mRNA"/>
</dbReference>
<dbReference type="EMBL" id="BC004001">
    <property type="protein sequence ID" value="AAH04001.1"/>
    <property type="status" value="ALT_SEQ"/>
    <property type="molecule type" value="mRNA"/>
</dbReference>
<dbReference type="EMBL" id="BC041148">
    <property type="protein sequence ID" value="AAH41148.2"/>
    <property type="molecule type" value="mRNA"/>
</dbReference>
<dbReference type="EMBL" id="BC050079">
    <property type="protein sequence ID" value="AAH50079.2"/>
    <property type="molecule type" value="mRNA"/>
</dbReference>
<dbReference type="EMBL" id="BC055863">
    <property type="protein sequence ID" value="AAH55863.1"/>
    <property type="status" value="ALT_INIT"/>
    <property type="molecule type" value="mRNA"/>
</dbReference>
<dbReference type="EMBL" id="BC058807">
    <property type="protein sequence ID" value="AAH58807.1"/>
    <property type="status" value="ALT_INIT"/>
    <property type="molecule type" value="mRNA"/>
</dbReference>
<dbReference type="EMBL" id="BC080309">
    <property type="protein sequence ID" value="AAH80309.1"/>
    <property type="molecule type" value="mRNA"/>
</dbReference>
<dbReference type="EMBL" id="BC108363">
    <property type="protein sequence ID" value="AAI08364.2"/>
    <property type="molecule type" value="mRNA"/>
</dbReference>
<dbReference type="EMBL" id="AF408434">
    <property type="protein sequence ID" value="AAL11726.1"/>
    <property type="molecule type" value="mRNA"/>
</dbReference>
<dbReference type="CCDS" id="CCDS23388.1">
    <molecule id="Q7TMK9-2"/>
</dbReference>
<dbReference type="CCDS" id="CCDS57686.1">
    <molecule id="Q7TMK9-1"/>
</dbReference>
<dbReference type="RefSeq" id="NP_001271257.1">
    <property type="nucleotide sequence ID" value="NM_001284328.1"/>
</dbReference>
<dbReference type="RefSeq" id="NP_001298042.1">
    <property type="nucleotide sequence ID" value="NM_001311113.1"/>
</dbReference>
<dbReference type="RefSeq" id="NP_062640.2">
    <molecule id="Q7TMK9-1"/>
    <property type="nucleotide sequence ID" value="NM_019666.2"/>
</dbReference>
<dbReference type="RefSeq" id="NP_062770.1">
    <molecule id="Q7TMK9-2"/>
    <property type="nucleotide sequence ID" value="NM_019796.5"/>
</dbReference>
<dbReference type="SMR" id="Q7TMK9"/>
<dbReference type="BioGRID" id="207955">
    <property type="interactions" value="109"/>
</dbReference>
<dbReference type="ComplexPortal" id="CPX-1078">
    <property type="entry name" value="mCRD-poly(A)-bridging complex"/>
</dbReference>
<dbReference type="ComplexPortal" id="CPX-1089">
    <property type="entry name" value="CRD-mediated mRNA stability complex"/>
</dbReference>
<dbReference type="ComplexPortal" id="CPX-1098">
    <molecule id="Q7TMK9-1"/>
    <property type="entry name" value="C-to-U editosome complex"/>
</dbReference>
<dbReference type="CORUM" id="Q7TMK9"/>
<dbReference type="FunCoup" id="Q7TMK9">
    <property type="interactions" value="4143"/>
</dbReference>
<dbReference type="IntAct" id="Q7TMK9">
    <property type="interactions" value="7"/>
</dbReference>
<dbReference type="MINT" id="Q7TMK9"/>
<dbReference type="STRING" id="10090.ENSMUSP00000133649"/>
<dbReference type="GlyGen" id="Q7TMK9">
    <property type="glycosylation" value="1 site, 1 O-linked glycan (1 site)"/>
</dbReference>
<dbReference type="iPTMnet" id="Q7TMK9"/>
<dbReference type="PhosphoSitePlus" id="Q7TMK9"/>
<dbReference type="SwissPalm" id="Q7TMK9"/>
<dbReference type="REPRODUCTION-2DPAGE" id="IPI00406117"/>
<dbReference type="jPOST" id="Q7TMK9"/>
<dbReference type="PaxDb" id="10090-ENSMUSP00000063744"/>
<dbReference type="PeptideAtlas" id="Q7TMK9"/>
<dbReference type="ProteomicsDB" id="273373">
    <molecule id="Q7TMK9-1"/>
</dbReference>
<dbReference type="ProteomicsDB" id="273374">
    <molecule id="Q7TMK9-2"/>
</dbReference>
<dbReference type="Pumba" id="Q7TMK9"/>
<dbReference type="Antibodypedia" id="18610">
    <property type="antibodies" value="305 antibodies from 37 providers"/>
</dbReference>
<dbReference type="DNASU" id="56403"/>
<dbReference type="Ensembl" id="ENSMUST00000069221.12">
    <molecule id="Q7TMK9-2"/>
    <property type="protein sequence ID" value="ENSMUSP00000063744.6"/>
    <property type="gene ID" value="ENSMUSG00000032423.14"/>
</dbReference>
<dbReference type="Ensembl" id="ENSMUST00000173801.8">
    <molecule id="Q7TMK9-1"/>
    <property type="protein sequence ID" value="ENSMUSP00000133649.2"/>
    <property type="gene ID" value="ENSMUSG00000032423.14"/>
</dbReference>
<dbReference type="GeneID" id="56403"/>
<dbReference type="KEGG" id="mmu:56403"/>
<dbReference type="UCSC" id="uc009qyo.2">
    <molecule id="Q7TMK9-2"/>
    <property type="organism name" value="mouse"/>
</dbReference>
<dbReference type="UCSC" id="uc009qyq.2">
    <molecule id="Q7TMK9-1"/>
    <property type="organism name" value="mouse"/>
</dbReference>
<dbReference type="AGR" id="MGI:1891690"/>
<dbReference type="CTD" id="10492"/>
<dbReference type="MGI" id="MGI:1891690">
    <property type="gene designation" value="Syncrip"/>
</dbReference>
<dbReference type="VEuPathDB" id="HostDB:ENSMUSG00000032423"/>
<dbReference type="eggNOG" id="KOG0117">
    <property type="taxonomic scope" value="Eukaryota"/>
</dbReference>
<dbReference type="GeneTree" id="ENSGT00940000153511"/>
<dbReference type="InParanoid" id="Q7TMK9"/>
<dbReference type="OMA" id="CVEYVCT"/>
<dbReference type="OrthoDB" id="3800936at2759"/>
<dbReference type="PhylomeDB" id="Q7TMK9"/>
<dbReference type="TreeFam" id="TF314932"/>
<dbReference type="BioGRID-ORCS" id="56403">
    <property type="hits" value="6 hits in 82 CRISPR screens"/>
</dbReference>
<dbReference type="CD-CODE" id="764D0258">
    <property type="entry name" value="Neuronal RNP granule"/>
</dbReference>
<dbReference type="CD-CODE" id="CE726F99">
    <property type="entry name" value="Postsynaptic density"/>
</dbReference>
<dbReference type="ChiTaRS" id="Syncrip">
    <property type="organism name" value="mouse"/>
</dbReference>
<dbReference type="PRO" id="PR:Q7TMK9"/>
<dbReference type="Proteomes" id="UP000000589">
    <property type="component" value="Chromosome 9"/>
</dbReference>
<dbReference type="RNAct" id="Q7TMK9">
    <property type="molecule type" value="protein"/>
</dbReference>
<dbReference type="Bgee" id="ENSMUSG00000032423">
    <property type="expression patterns" value="Expressed in ureter smooth muscle and 280 other cell types or tissues"/>
</dbReference>
<dbReference type="ExpressionAtlas" id="Q7TMK9">
    <property type="expression patterns" value="baseline and differential"/>
</dbReference>
<dbReference type="GO" id="GO:0070937">
    <property type="term" value="C:CRD-mediated mRNA stability complex"/>
    <property type="evidence" value="ECO:0000250"/>
    <property type="project" value="UniProtKB"/>
</dbReference>
<dbReference type="GO" id="GO:0005737">
    <property type="term" value="C:cytoplasm"/>
    <property type="evidence" value="ECO:0000314"/>
    <property type="project" value="MGI"/>
</dbReference>
<dbReference type="GO" id="GO:0005829">
    <property type="term" value="C:cytosol"/>
    <property type="evidence" value="ECO:0000266"/>
    <property type="project" value="ComplexPortal"/>
</dbReference>
<dbReference type="GO" id="GO:0005783">
    <property type="term" value="C:endoplasmic reticulum"/>
    <property type="evidence" value="ECO:0007669"/>
    <property type="project" value="UniProtKB-KW"/>
</dbReference>
<dbReference type="GO" id="GO:0071204">
    <property type="term" value="C:histone pre-mRNA 3'end processing complex"/>
    <property type="evidence" value="ECO:0000314"/>
    <property type="project" value="UniProtKB"/>
</dbReference>
<dbReference type="GO" id="GO:0106002">
    <property type="term" value="C:mCRD-mediated mRNA stability complex"/>
    <property type="evidence" value="ECO:0000266"/>
    <property type="project" value="ComplexPortal"/>
</dbReference>
<dbReference type="GO" id="GO:0045293">
    <property type="term" value="C:mRNA editing complex"/>
    <property type="evidence" value="ECO:0000303"/>
    <property type="project" value="ComplexPortal"/>
</dbReference>
<dbReference type="GO" id="GO:0005654">
    <property type="term" value="C:nucleoplasm"/>
    <property type="evidence" value="ECO:0007669"/>
    <property type="project" value="UniProtKB-SubCell"/>
</dbReference>
<dbReference type="GO" id="GO:0005634">
    <property type="term" value="C:nucleus"/>
    <property type="evidence" value="ECO:0000266"/>
    <property type="project" value="ComplexPortal"/>
</dbReference>
<dbReference type="GO" id="GO:1990904">
    <property type="term" value="C:ribonucleoprotein complex"/>
    <property type="evidence" value="ECO:0000250"/>
    <property type="project" value="UniProtKB"/>
</dbReference>
<dbReference type="GO" id="GO:0005681">
    <property type="term" value="C:spliceosomal complex"/>
    <property type="evidence" value="ECO:0007669"/>
    <property type="project" value="UniProtKB-KW"/>
</dbReference>
<dbReference type="GO" id="GO:0008143">
    <property type="term" value="F:poly(A) binding"/>
    <property type="evidence" value="ECO:0000314"/>
    <property type="project" value="MGI"/>
</dbReference>
<dbReference type="GO" id="GO:0141166">
    <property type="term" value="P:chromosomal 5-methylcytosine DNA demethylation pathway"/>
    <property type="evidence" value="ECO:0000303"/>
    <property type="project" value="ComplexPortal"/>
</dbReference>
<dbReference type="GO" id="GO:0070934">
    <property type="term" value="P:CRD-mediated mRNA stabilization"/>
    <property type="evidence" value="ECO:0000266"/>
    <property type="project" value="ComplexPortal"/>
</dbReference>
<dbReference type="GO" id="GO:0016556">
    <property type="term" value="P:mRNA modification"/>
    <property type="evidence" value="ECO:0000266"/>
    <property type="project" value="ComplexPortal"/>
</dbReference>
<dbReference type="GO" id="GO:0006397">
    <property type="term" value="P:mRNA processing"/>
    <property type="evidence" value="ECO:0007669"/>
    <property type="project" value="UniProtKB-KW"/>
</dbReference>
<dbReference type="GO" id="GO:1900152">
    <property type="term" value="P:negative regulation of nuclear-transcribed mRNA catabolic process, deadenylation-dependent decay"/>
    <property type="evidence" value="ECO:0000266"/>
    <property type="project" value="ComplexPortal"/>
</dbReference>
<dbReference type="GO" id="GO:2000623">
    <property type="term" value="P:negative regulation of nuclear-transcribed mRNA catabolic process, nonsense-mediated decay"/>
    <property type="evidence" value="ECO:0000266"/>
    <property type="project" value="ComplexPortal"/>
</dbReference>
<dbReference type="GO" id="GO:2000767">
    <property type="term" value="P:positive regulation of cytoplasmic translation"/>
    <property type="evidence" value="ECO:0000266"/>
    <property type="project" value="ComplexPortal"/>
</dbReference>
<dbReference type="GO" id="GO:0008380">
    <property type="term" value="P:RNA splicing"/>
    <property type="evidence" value="ECO:0007669"/>
    <property type="project" value="UniProtKB-KW"/>
</dbReference>
<dbReference type="CDD" id="cd21066">
    <property type="entry name" value="NURR_hnRNPQ"/>
    <property type="match status" value="1"/>
</dbReference>
<dbReference type="CDD" id="cd12483">
    <property type="entry name" value="RRM1_hnRNPQ"/>
    <property type="match status" value="1"/>
</dbReference>
<dbReference type="CDD" id="cd12489">
    <property type="entry name" value="RRM2_hnRNPQ"/>
    <property type="match status" value="1"/>
</dbReference>
<dbReference type="CDD" id="cd12495">
    <property type="entry name" value="RRM3_hnRNPQ"/>
    <property type="match status" value="1"/>
</dbReference>
<dbReference type="FunFam" id="3.30.70.330:FF:000023">
    <property type="entry name" value="Heterogeneous nuclear ribonucleoprotein q isoform"/>
    <property type="match status" value="1"/>
</dbReference>
<dbReference type="FunFam" id="3.30.70.330:FF:000024">
    <property type="entry name" value="Heterogeneous nuclear ribonucleoprotein q isoform"/>
    <property type="match status" value="1"/>
</dbReference>
<dbReference type="FunFam" id="3.30.70.330:FF:000027">
    <property type="entry name" value="Heterogeneous nuclear ribonucleoprotein q isoform"/>
    <property type="match status" value="1"/>
</dbReference>
<dbReference type="Gene3D" id="3.30.70.330">
    <property type="match status" value="3"/>
</dbReference>
<dbReference type="InterPro" id="IPR041337">
    <property type="entry name" value="hnRNP_Q_AcD"/>
</dbReference>
<dbReference type="InterPro" id="IPR006535">
    <property type="entry name" value="HnRNP_R/Q_splicing_fac"/>
</dbReference>
<dbReference type="InterPro" id="IPR034544">
    <property type="entry name" value="hnRNPQ_RRM1"/>
</dbReference>
<dbReference type="InterPro" id="IPR034548">
    <property type="entry name" value="hnRNPQ_RRM2"/>
</dbReference>
<dbReference type="InterPro" id="IPR012677">
    <property type="entry name" value="Nucleotide-bd_a/b_plait_sf"/>
</dbReference>
<dbReference type="InterPro" id="IPR035979">
    <property type="entry name" value="RBD_domain_sf"/>
</dbReference>
<dbReference type="InterPro" id="IPR000504">
    <property type="entry name" value="RRM_dom"/>
</dbReference>
<dbReference type="NCBIfam" id="TIGR01648">
    <property type="entry name" value="hnRNP-R-Q"/>
    <property type="match status" value="1"/>
</dbReference>
<dbReference type="PANTHER" id="PTHR21245">
    <property type="entry name" value="HETEROGENEOUS NUCLEAR RIBONUCLEOPROTEIN"/>
    <property type="match status" value="1"/>
</dbReference>
<dbReference type="Pfam" id="PF18360">
    <property type="entry name" value="hnRNP_Q_AcD"/>
    <property type="match status" value="1"/>
</dbReference>
<dbReference type="Pfam" id="PF00076">
    <property type="entry name" value="RRM_1"/>
    <property type="match status" value="3"/>
</dbReference>
<dbReference type="SMART" id="SM00360">
    <property type="entry name" value="RRM"/>
    <property type="match status" value="3"/>
</dbReference>
<dbReference type="SUPFAM" id="SSF54928">
    <property type="entry name" value="RNA-binding domain, RBD"/>
    <property type="match status" value="3"/>
</dbReference>
<dbReference type="PROSITE" id="PS50102">
    <property type="entry name" value="RRM"/>
    <property type="match status" value="3"/>
</dbReference>
<reference key="1">
    <citation type="journal article" date="2000" name="Chin. Sci. Bull.">
        <title>Cloning of human and mouse GRY-RBP cDNA.</title>
        <authorList>
            <person name="Du G."/>
            <person name="Pan M."/>
            <person name="Zhou Y."/>
            <person name="Chen J."/>
            <person name="Yao H."/>
            <person name="Yuan J."/>
            <person name="Qiang B."/>
        </authorList>
    </citation>
    <scope>NUCLEOTIDE SEQUENCE [MRNA] (ISOFORM 1)</scope>
</reference>
<reference key="2">
    <citation type="journal article" date="2000" name="J. Biol. Chem.">
        <title>SYNCRIP, a cytoplasmic counterpart of heterogeneous nuclear ribonucleoprotein R, interacts with ubiquitous synaptotagmin isoforms.</title>
        <authorList>
            <person name="Mizutani A."/>
            <person name="Fukuda M."/>
            <person name="Ibata K."/>
            <person name="Shiraishi Y."/>
            <person name="Mikoshiba K."/>
        </authorList>
    </citation>
    <scope>NUCLEOTIDE SEQUENCE [MRNA] (ISOFORM 2)</scope>
    <scope>PROTEIN SEQUENCE OF 257-282</scope>
    <scope>TISSUE SPECIFICITY</scope>
    <scope>SUBCELLULAR LOCATION</scope>
    <scope>RNA-BINDING</scope>
    <scope>INTERACTION WITH SYT7; SYT8 AND SYT9</scope>
    <source>
        <strain>ddY</strain>
        <tissue>Brain</tissue>
        <tissue>Cerebellum</tissue>
    </source>
</reference>
<reference key="3">
    <citation type="journal article" date="2005" name="Science">
        <title>The transcriptional landscape of the mammalian genome.</title>
        <authorList>
            <person name="Carninci P."/>
            <person name="Kasukawa T."/>
            <person name="Katayama S."/>
            <person name="Gough J."/>
            <person name="Frith M.C."/>
            <person name="Maeda N."/>
            <person name="Oyama R."/>
            <person name="Ravasi T."/>
            <person name="Lenhard B."/>
            <person name="Wells C."/>
            <person name="Kodzius R."/>
            <person name="Shimokawa K."/>
            <person name="Bajic V.B."/>
            <person name="Brenner S.E."/>
            <person name="Batalov S."/>
            <person name="Forrest A.R."/>
            <person name="Zavolan M."/>
            <person name="Davis M.J."/>
            <person name="Wilming L.G."/>
            <person name="Aidinis V."/>
            <person name="Allen J.E."/>
            <person name="Ambesi-Impiombato A."/>
            <person name="Apweiler R."/>
            <person name="Aturaliya R.N."/>
            <person name="Bailey T.L."/>
            <person name="Bansal M."/>
            <person name="Baxter L."/>
            <person name="Beisel K.W."/>
            <person name="Bersano T."/>
            <person name="Bono H."/>
            <person name="Chalk A.M."/>
            <person name="Chiu K.P."/>
            <person name="Choudhary V."/>
            <person name="Christoffels A."/>
            <person name="Clutterbuck D.R."/>
            <person name="Crowe M.L."/>
            <person name="Dalla E."/>
            <person name="Dalrymple B.P."/>
            <person name="de Bono B."/>
            <person name="Della Gatta G."/>
            <person name="di Bernardo D."/>
            <person name="Down T."/>
            <person name="Engstrom P."/>
            <person name="Fagiolini M."/>
            <person name="Faulkner G."/>
            <person name="Fletcher C.F."/>
            <person name="Fukushima T."/>
            <person name="Furuno M."/>
            <person name="Futaki S."/>
            <person name="Gariboldi M."/>
            <person name="Georgii-Hemming P."/>
            <person name="Gingeras T.R."/>
            <person name="Gojobori T."/>
            <person name="Green R.E."/>
            <person name="Gustincich S."/>
            <person name="Harbers M."/>
            <person name="Hayashi Y."/>
            <person name="Hensch T.K."/>
            <person name="Hirokawa N."/>
            <person name="Hill D."/>
            <person name="Huminiecki L."/>
            <person name="Iacono M."/>
            <person name="Ikeo K."/>
            <person name="Iwama A."/>
            <person name="Ishikawa T."/>
            <person name="Jakt M."/>
            <person name="Kanapin A."/>
            <person name="Katoh M."/>
            <person name="Kawasawa Y."/>
            <person name="Kelso J."/>
            <person name="Kitamura H."/>
            <person name="Kitano H."/>
            <person name="Kollias G."/>
            <person name="Krishnan S.P."/>
            <person name="Kruger A."/>
            <person name="Kummerfeld S.K."/>
            <person name="Kurochkin I.V."/>
            <person name="Lareau L.F."/>
            <person name="Lazarevic D."/>
            <person name="Lipovich L."/>
            <person name="Liu J."/>
            <person name="Liuni S."/>
            <person name="McWilliam S."/>
            <person name="Madan Babu M."/>
            <person name="Madera M."/>
            <person name="Marchionni L."/>
            <person name="Matsuda H."/>
            <person name="Matsuzawa S."/>
            <person name="Miki H."/>
            <person name="Mignone F."/>
            <person name="Miyake S."/>
            <person name="Morris K."/>
            <person name="Mottagui-Tabar S."/>
            <person name="Mulder N."/>
            <person name="Nakano N."/>
            <person name="Nakauchi H."/>
            <person name="Ng P."/>
            <person name="Nilsson R."/>
            <person name="Nishiguchi S."/>
            <person name="Nishikawa S."/>
            <person name="Nori F."/>
            <person name="Ohara O."/>
            <person name="Okazaki Y."/>
            <person name="Orlando V."/>
            <person name="Pang K.C."/>
            <person name="Pavan W.J."/>
            <person name="Pavesi G."/>
            <person name="Pesole G."/>
            <person name="Petrovsky N."/>
            <person name="Piazza S."/>
            <person name="Reed J."/>
            <person name="Reid J.F."/>
            <person name="Ring B.Z."/>
            <person name="Ringwald M."/>
            <person name="Rost B."/>
            <person name="Ruan Y."/>
            <person name="Salzberg S.L."/>
            <person name="Sandelin A."/>
            <person name="Schneider C."/>
            <person name="Schoenbach C."/>
            <person name="Sekiguchi K."/>
            <person name="Semple C.A."/>
            <person name="Seno S."/>
            <person name="Sessa L."/>
            <person name="Sheng Y."/>
            <person name="Shibata Y."/>
            <person name="Shimada H."/>
            <person name="Shimada K."/>
            <person name="Silva D."/>
            <person name="Sinclair B."/>
            <person name="Sperling S."/>
            <person name="Stupka E."/>
            <person name="Sugiura K."/>
            <person name="Sultana R."/>
            <person name="Takenaka Y."/>
            <person name="Taki K."/>
            <person name="Tammoja K."/>
            <person name="Tan S.L."/>
            <person name="Tang S."/>
            <person name="Taylor M.S."/>
            <person name="Tegner J."/>
            <person name="Teichmann S.A."/>
            <person name="Ueda H.R."/>
            <person name="van Nimwegen E."/>
            <person name="Verardo R."/>
            <person name="Wei C.L."/>
            <person name="Yagi K."/>
            <person name="Yamanishi H."/>
            <person name="Zabarovsky E."/>
            <person name="Zhu S."/>
            <person name="Zimmer A."/>
            <person name="Hide W."/>
            <person name="Bult C."/>
            <person name="Grimmond S.M."/>
            <person name="Teasdale R.D."/>
            <person name="Liu E.T."/>
            <person name="Brusic V."/>
            <person name="Quackenbush J."/>
            <person name="Wahlestedt C."/>
            <person name="Mattick J.S."/>
            <person name="Hume D.A."/>
            <person name="Kai C."/>
            <person name="Sasaki D."/>
            <person name="Tomaru Y."/>
            <person name="Fukuda S."/>
            <person name="Kanamori-Katayama M."/>
            <person name="Suzuki M."/>
            <person name="Aoki J."/>
            <person name="Arakawa T."/>
            <person name="Iida J."/>
            <person name="Imamura K."/>
            <person name="Itoh M."/>
            <person name="Kato T."/>
            <person name="Kawaji H."/>
            <person name="Kawagashira N."/>
            <person name="Kawashima T."/>
            <person name="Kojima M."/>
            <person name="Kondo S."/>
            <person name="Konno H."/>
            <person name="Nakano K."/>
            <person name="Ninomiya N."/>
            <person name="Nishio T."/>
            <person name="Okada M."/>
            <person name="Plessy C."/>
            <person name="Shibata K."/>
            <person name="Shiraki T."/>
            <person name="Suzuki S."/>
            <person name="Tagami M."/>
            <person name="Waki K."/>
            <person name="Watahiki A."/>
            <person name="Okamura-Oho Y."/>
            <person name="Suzuki H."/>
            <person name="Kawai J."/>
            <person name="Hayashizaki Y."/>
        </authorList>
    </citation>
    <scope>NUCLEOTIDE SEQUENCE [LARGE SCALE MRNA] (ISOFORM 2)</scope>
    <source>
        <strain>C57BL/6J</strain>
        <tissue>Embryo</tissue>
        <tissue>Medulla oblongata</tissue>
    </source>
</reference>
<reference key="4">
    <citation type="journal article" date="2004" name="Genome Res.">
        <title>The status, quality, and expansion of the NIH full-length cDNA project: the Mammalian Gene Collection (MGC).</title>
        <authorList>
            <consortium name="The MGC Project Team"/>
        </authorList>
    </citation>
    <scope>NUCLEOTIDE SEQUENCE [LARGE SCALE MRNA] (ISOFORMS 1 AND 2)</scope>
    <source>
        <strain>C57BL/6J</strain>
        <strain>Czech II</strain>
        <strain>FVB/N</strain>
        <tissue>Embryo</tissue>
        <tissue>Embryonic brain</tissue>
        <tissue>Kidney</tissue>
        <tissue>Mammary tumor</tissue>
        <tissue>Retina</tissue>
    </source>
</reference>
<reference key="5">
    <citation type="submission" date="2001-08" db="EMBL/GenBank/DDBJ databases">
        <title>Mus musculus RRM RNA binding protein, NSAP1.</title>
        <authorList>
            <person name="Zhou M."/>
            <person name="Raschke W.C."/>
        </authorList>
    </citation>
    <scope>NUCLEOTIDE SEQUENCE [MRNA] OF 66-561 (ISOFORM 2)</scope>
</reference>
<reference key="6">
    <citation type="journal article" date="2002" name="J. Biol. Chem.">
        <title>Identification of pp68 as the tyrosine-phosphorylated form of SYNCRIP/NSAP1. A cytoplasmic RNA-binding protein.</title>
        <authorList>
            <person name="Hresko R.C."/>
            <person name="Mueckler M."/>
        </authorList>
    </citation>
    <scope>IDENTIFICATION BY MASS SPECTROMETRY</scope>
    <scope>SUBCELLULAR LOCATION</scope>
    <scope>PHOSPHORYLATION AT TYROSINE RESIDUES</scope>
    <scope>ASSOCIATION WITH POLYSOMES</scope>
    <source>
        <tissue>Adipocyte</tissue>
    </source>
</reference>
<reference key="7">
    <citation type="journal article" date="1999" name="J. Virol.">
        <title>A novel heterogeneous nuclear ribonucleoprotein-like protein interacts with NS1 of the minute virus of mice.</title>
        <authorList>
            <person name="Harris C.E."/>
            <person name="Boden R.A."/>
            <person name="Astell C.R."/>
        </authorList>
    </citation>
    <scope>TISSUE SPECIFICITY</scope>
</reference>
<reference key="8">
    <citation type="journal article" date="2002" name="Hum. Mol. Genet.">
        <title>Specific interaction of Smn, the spinal muscular atrophy determining gene product, with hnRNP-R and gry-rbp/hnRNP-Q: a role for Smn in RNA processing in motor axons?</title>
        <authorList>
            <person name="Rossoll W."/>
            <person name="Kroening A.-K."/>
            <person name="Ohndorf U.-M."/>
            <person name="Steegborn C."/>
            <person name="Jablonka S."/>
            <person name="Sendtner M."/>
        </authorList>
    </citation>
    <scope>TISSUE SPECIFICITY</scope>
    <scope>DEVELOPMENTAL STAGE</scope>
    <scope>INTERACTION WITH SMN</scope>
</reference>
<reference key="9">
    <citation type="journal article" date="2009" name="Mol. Cell. Biol.">
        <title>Three proteins of the U7-specific Sm ring function as the molecular ruler to determine the site of 3'-end processing in mammalian histone pre-mRNA.</title>
        <authorList>
            <person name="Yang X.-C."/>
            <person name="Torres M.P."/>
            <person name="Marzluff W.F."/>
            <person name="Dominski Z."/>
        </authorList>
    </citation>
    <scope>IDENTIFICATION IN A HISTONE PRE-MRNA COMPLEX</scope>
    <scope>IDENTIFICATION BY MASS SPECTROMETRY</scope>
</reference>
<reference key="10">
    <citation type="journal article" date="2010" name="Cell">
        <title>A tissue-specific atlas of mouse protein phosphorylation and expression.</title>
        <authorList>
            <person name="Huttlin E.L."/>
            <person name="Jedrychowski M.P."/>
            <person name="Elias J.E."/>
            <person name="Goswami T."/>
            <person name="Rad R."/>
            <person name="Beausoleil S.A."/>
            <person name="Villen J."/>
            <person name="Haas W."/>
            <person name="Sowa M.E."/>
            <person name="Gygi S.P."/>
        </authorList>
    </citation>
    <scope>IDENTIFICATION BY MASS SPECTROMETRY [LARGE SCALE ANALYSIS]</scope>
    <source>
        <tissue>Brain</tissue>
        <tissue>Brown adipose tissue</tissue>
        <tissue>Heart</tissue>
        <tissue>Kidney</tissue>
        <tissue>Liver</tissue>
        <tissue>Lung</tissue>
        <tissue>Pancreas</tissue>
        <tissue>Spleen</tissue>
        <tissue>Testis</tissue>
    </source>
</reference>
<proteinExistence type="evidence at protein level"/>
<protein>
    <recommendedName>
        <fullName>Heterogeneous nuclear ribonucleoprotein Q</fullName>
        <shortName>hnRNP Q</shortName>
    </recommendedName>
    <alternativeName>
        <fullName>Glycine- and tyrosine-rich RNA-binding protein</fullName>
        <shortName>GRY-RBP</shortName>
    </alternativeName>
    <alternativeName>
        <fullName>NS1-associated protein 1</fullName>
    </alternativeName>
    <alternativeName>
        <fullName>Synaptotagmin-binding, cytoplasmic RNA-interacting protein</fullName>
    </alternativeName>
    <alternativeName>
        <fullName>pp68</fullName>
    </alternativeName>
</protein>
<name>HNRPQ_MOUSE</name>
<sequence length="623" mass="69633">MATEHVNGNGTEEPMDTTSAVIHSENFQTLLDAGLPQKVAEKLDEIYVAGLVAHSDLDERAIEALKEFNEDGALAVLQQFKDSDLSHVQNKSAFLCGVMKTYRQREKQGTKVADSSKGPDEAKIKALLERTGYTLDVTTGQRKYGGPPPDSVYSGQQPSVGTEIFVGKIPRDLFEDELVPLFEKAGPIWDLRLMMDPLTGLNRGYAFVTFCTKEAAQEAVKLYNNHEIRSGKHIGVCISVANNRLFVGSIPKSKTKEQILEEFSKVTEGLTDVILYHQPDDKKKNRGFCFLEYEDHKTAAQARRRLMSGKVKVWGNVGTVEWADPIEDPDPEVMAKVKVLFVRNLANTVTEEILEKSFSQFGKLERVKKLKDYAFIHFDERDGAVKAMEEMNGKDLEGENIEIVFAKPPDQKRKERKAQRQAAKNQMYDDYYYYGPPHMPPPTRGRGRGGRGGYGYPPDYYGYEDYYDYYGYDYHNYRGGYEDPYYGYEDFQVGARGRGGRGARGAAPSRGRGAAPPRGRAGYSQRGGPGSARGVRGARGGAQQQRGRGVRGARGGRGGNVGGKRKADGYNQPDTKRRQTNNQNWGSQPIAQQPLQGGDHSGNYGYKSENQEFYQDTFGQQWK</sequence>
<gene>
    <name type="primary">Syncrip</name>
    <name type="synonym">Hnrpq</name>
    <name type="synonym">Nsap1</name>
    <name type="synonym">Nsap1l</name>
</gene>
<keyword id="KW-0007">Acetylation</keyword>
<keyword id="KW-0025">Alternative splicing</keyword>
<keyword id="KW-0963">Cytoplasm</keyword>
<keyword id="KW-0903">Direct protein sequencing</keyword>
<keyword id="KW-0256">Endoplasmic reticulum</keyword>
<keyword id="KW-1017">Isopeptide bond</keyword>
<keyword id="KW-0488">Methylation</keyword>
<keyword id="KW-0492">Microsome</keyword>
<keyword id="KW-0507">mRNA processing</keyword>
<keyword id="KW-0508">mRNA splicing</keyword>
<keyword id="KW-0539">Nucleus</keyword>
<keyword id="KW-0597">Phosphoprotein</keyword>
<keyword id="KW-1185">Reference proteome</keyword>
<keyword id="KW-0677">Repeat</keyword>
<keyword id="KW-0687">Ribonucleoprotein</keyword>
<keyword id="KW-0694">RNA-binding</keyword>
<keyword id="KW-0747">Spliceosome</keyword>
<keyword id="KW-0832">Ubl conjugation</keyword>
<feature type="initiator methionine" description="Removed" evidence="3">
    <location>
        <position position="1"/>
    </location>
</feature>
<feature type="chain" id="PRO_0000081868" description="Heterogeneous nuclear ribonucleoprotein Q">
    <location>
        <begin position="2"/>
        <end position="623"/>
    </location>
</feature>
<feature type="domain" description="RRM 1" evidence="5">
    <location>
        <begin position="162"/>
        <end position="241"/>
    </location>
</feature>
<feature type="domain" description="RRM 2" evidence="5">
    <location>
        <begin position="243"/>
        <end position="325"/>
    </location>
</feature>
<feature type="domain" description="RRM 3" evidence="5">
    <location>
        <begin position="338"/>
        <end position="408"/>
    </location>
</feature>
<feature type="repeat" description="1-1">
    <location>
        <begin position="448"/>
        <end position="450"/>
    </location>
</feature>
<feature type="repeat" description="1-2">
    <location>
        <begin position="451"/>
        <end position="453"/>
    </location>
</feature>
<feature type="repeat" description="2-1">
    <location>
        <begin position="460"/>
        <end position="464"/>
    </location>
</feature>
<feature type="repeat" description="2-2">
    <location>
        <begin position="469"/>
        <end position="472"/>
    </location>
</feature>
<feature type="repeat" description="1-3">
    <location>
        <begin position="478"/>
        <end position="480"/>
    </location>
</feature>
<feature type="repeat" description="2-3">
    <location>
        <begin position="485"/>
        <end position="488"/>
    </location>
</feature>
<feature type="repeat" description="1-4">
    <location>
        <begin position="498"/>
        <end position="500"/>
    </location>
</feature>
<feature type="repeat" description="1-5">
    <location>
        <begin position="526"/>
        <end position="528"/>
    </location>
</feature>
<feature type="repeat" description="1-6">
    <location>
        <begin position="539"/>
        <end position="541"/>
    </location>
</feature>
<feature type="repeat" description="1-7">
    <location>
        <begin position="554"/>
        <end position="556"/>
    </location>
</feature>
<feature type="repeat" description="1-8">
    <location>
        <begin position="557"/>
        <end position="559"/>
    </location>
</feature>
<feature type="region of interest" description="Interaction with APOBEC1" evidence="1">
    <location>
        <begin position="400"/>
        <end position="561"/>
    </location>
</feature>
<feature type="region of interest" description="8 X 3 AA repeats of R-G-G">
    <location>
        <begin position="448"/>
        <end position="559"/>
    </location>
</feature>
<feature type="region of interest" description="3 X 4 AA repeats of Y-Y-G-Y">
    <location>
        <begin position="460"/>
        <end position="488"/>
    </location>
</feature>
<feature type="region of interest" description="Disordered" evidence="6">
    <location>
        <begin position="497"/>
        <end position="623"/>
    </location>
</feature>
<feature type="region of interest" description="Interaction with SMN" evidence="1">
    <location>
        <begin position="518"/>
        <end position="549"/>
    </location>
</feature>
<feature type="short sequence motif" description="Bipartite nuclear localization signal" evidence="4">
    <location>
        <begin position="564"/>
        <end position="578"/>
    </location>
</feature>
<feature type="compositionally biased region" description="Low complexity" evidence="6">
    <location>
        <begin position="504"/>
        <end position="522"/>
    </location>
</feature>
<feature type="compositionally biased region" description="Gly residues" evidence="6">
    <location>
        <begin position="550"/>
        <end position="562"/>
    </location>
</feature>
<feature type="compositionally biased region" description="Polar residues" evidence="6">
    <location>
        <begin position="580"/>
        <end position="595"/>
    </location>
</feature>
<feature type="compositionally biased region" description="Polar residues" evidence="6">
    <location>
        <begin position="611"/>
        <end position="623"/>
    </location>
</feature>
<feature type="modified residue" description="N-acetylalanine" evidence="3">
    <location>
        <position position="2"/>
    </location>
</feature>
<feature type="modified residue" description="Phosphoserine" evidence="3">
    <location>
        <position position="159"/>
    </location>
</feature>
<feature type="modified residue" description="N6-acetyllysine" evidence="3">
    <location>
        <position position="221"/>
    </location>
</feature>
<feature type="modified residue" description="N6-acetyllysine" evidence="3">
    <location>
        <position position="363"/>
    </location>
</feature>
<feature type="modified residue" description="Phosphotyrosine" evidence="3">
    <location>
        <position position="373"/>
    </location>
</feature>
<feature type="modified residue" description="Asymmetric dimethylarginine; by PRMT1; alternate" evidence="3">
    <location>
        <position position="444"/>
    </location>
</feature>
<feature type="modified residue" description="Omega-N-methylarginine; by PRMT1; alternate" evidence="3">
    <location>
        <position position="444"/>
    </location>
</feature>
<feature type="modified residue" description="Omega-N-methylarginine; by PRMT1" evidence="3">
    <location>
        <position position="496"/>
    </location>
</feature>
<feature type="modified residue" description="Asymmetric dimethylarginine; by PRMT1" evidence="3">
    <location>
        <position position="510"/>
    </location>
</feature>
<feature type="modified residue" description="Asymmetric dimethylarginine; by PRMT1; alternate" evidence="3">
    <location>
        <position position="518"/>
    </location>
</feature>
<feature type="modified residue" description="Omega-N-methylarginine; by PRMT1; alternate" evidence="3">
    <location>
        <position position="518"/>
    </location>
</feature>
<feature type="modified residue" description="Asymmetric dimethylarginine; alternate" evidence="3">
    <location>
        <position position="526"/>
    </location>
</feature>
<feature type="modified residue" description="Omega-N-methylarginine; alternate" evidence="3">
    <location>
        <position position="526"/>
    </location>
</feature>
<feature type="modified residue" description="Asymmetric dimethylarginine; by PRMT1; alternate" evidence="3">
    <location>
        <position position="536"/>
    </location>
</feature>
<feature type="modified residue" description="Omega-N-methylarginine; by PRMT1; alternate" evidence="3">
    <location>
        <position position="536"/>
    </location>
</feature>
<feature type="modified residue" description="Asymmetric dimethylarginine; by PRMT1; alternate" evidence="3">
    <location>
        <position position="539"/>
    </location>
</feature>
<feature type="modified residue" description="Omega-N-methylarginine; by PRMT1; alternate" evidence="3">
    <location>
        <position position="539"/>
    </location>
</feature>
<feature type="modified residue" description="Phosphoserine" evidence="3">
    <location>
        <position position="587"/>
    </location>
</feature>
<feature type="cross-link" description="Glycyl lysine isopeptide (Lys-Gly) (interchain with G-Cter in SUMO2)" evidence="3">
    <location>
        <position position="168"/>
    </location>
</feature>
<feature type="cross-link" description="Glycyl lysine isopeptide (Lys-Gly) (interchain with G-Cter in SUMO2)" evidence="3">
    <location>
        <position position="607"/>
    </location>
</feature>
<feature type="splice variant" id="VSP_009585" description="In isoform 2." evidence="12 13 14 15">
    <original>VRGARGGRGGNVG</original>
    <variation>QGKGVEAGPDLLQ</variation>
    <location>
        <begin position="550"/>
        <end position="562"/>
    </location>
</feature>
<feature type="splice variant" id="VSP_009586" description="In isoform 2." evidence="12 13 14 15">
    <location>
        <begin position="563"/>
        <end position="623"/>
    </location>
</feature>
<feature type="sequence conflict" description="In Ref. 4; AAH58807." evidence="16" ref="4">
    <original>K</original>
    <variation>E</variation>
    <location>
        <position position="143"/>
    </location>
</feature>
<feature type="sequence conflict" description="In Ref. 4; AAH50079." evidence="16" ref="4">
    <original>M</original>
    <variation>T</variation>
    <location>
        <position position="194"/>
    </location>
</feature>
<feature type="sequence conflict" description="In Ref. 1; AAC62511." evidence="16" ref="1">
    <original>L</original>
    <variation>LTGL</variation>
    <location>
        <position position="201"/>
    </location>
</feature>
<feature type="sequence conflict" description="In Ref. 1; AAC62511." evidence="16" ref="1">
    <original>V</original>
    <variation>A</variation>
    <location>
        <position position="220"/>
    </location>
</feature>
<feature type="sequence conflict" description="In Ref. 1; AAC62511." evidence="16" ref="1">
    <original>L</original>
    <variation>Q</variation>
    <location>
        <position position="291"/>
    </location>
</feature>
<feature type="sequence conflict" description="In Ref. 1; AAC62511." evidence="16" ref="1">
    <original>T</original>
    <variation>A</variation>
    <location>
        <position position="298"/>
    </location>
</feature>
<feature type="sequence conflict" description="In Ref. 3; BAC37152." evidence="16" ref="3">
    <original>K</original>
    <variation>N</variation>
    <location>
        <position position="407"/>
    </location>
</feature>
<feature type="sequence conflict" description="In Ref. 3; BAC37152." evidence="16" ref="3">
    <original>Q</original>
    <variation>K</variation>
    <location>
        <position position="411"/>
    </location>
</feature>
<feature type="sequence conflict" description="In Ref. 3; BAC37152." evidence="16" ref="3">
    <original>Q</original>
    <variation>H</variation>
    <location>
        <position position="421"/>
    </location>
</feature>
<feature type="sequence conflict" description="In Ref. 1; AAC62511." evidence="16" ref="1">
    <original>G</original>
    <variation>A</variation>
    <location>
        <position position="528"/>
    </location>
</feature>
<feature type="sequence conflict" description="In Ref. 1; AAC62511." evidence="16" ref="1">
    <location>
        <position position="543"/>
    </location>
</feature>
<feature type="sequence conflict" description="In Ref. 1; AAC62511." evidence="16" ref="1">
    <original>N</original>
    <variation>H</variation>
    <location>
        <position position="582"/>
    </location>
</feature>
<feature type="sequence conflict" description="In Ref. 2; BAA88342 and 4; AAH41148." evidence="16" ref="2 4">
    <original>GQ</original>
    <variation>G</variation>
    <location sequence="Q7TMK9-2">
        <begin position="549"/>
        <end position="550"/>
    </location>
</feature>
<comment type="function">
    <text evidence="1">Heterogeneous nuclear ribonucleoprotein (hnRNP) implicated in mRNA processing mechanisms. Component of the CRD-mediated complex that promotes MYC mRNA stability. Isoform 1 and isoform 2 are associated in vitro with pre-mRNA, splicing intermediates and mature mRNA protein complexes. Isoform 1 binds to apoB mRNA AU-rich sequences (By similarity). Isoform 1 is part of the APOB mRNA editosome complex and may modulate the postranscriptional C to U RNA-editing of the APOB mRNA through either by binding to A1CF (APOBEC1 complementation factor), to APOBEC1 or to RNA itself (By similarity). May be involved in translationally coupled mRNA turnover. Implicated with other RNA-binding proteins in the cytoplasmic deadenylation/translational and decay interplay of the FOS mRNA mediated by the major coding-region determinant of instability (mCRD) domain (By similarity). Interacts in vitro preferentially with poly(A) and poly(U) RNA sequences. Isoform 2 may be involved in cytoplasmic vesicle-based mRNA transport through interaction with synaptotagmins.</text>
</comment>
<comment type="subunit">
    <text evidence="3 7 8 10">Identified in the spliceosome C complex. Component of the coding region determinant (CRD)-mediated complex, composed of DHX9, HNRNPU, IGF2BP1, SYNCRIP and YBX1. Identified in a mRNP complex, at least composed of DHX9, DDX3X, ELAVL1, HNRNPU, IGF2BP1, ILF3, PABPC1, PCBP2, PTBP2, STAU1, STAU2, SYNCRIP and YBX1. Identified in a mRNP granule complex, at least composed of ACTB, ACTN4, DHX9, ERG, HNRNPA1, HNRNPA2B1, HNRNPAB, HNRNPD, HNRNPL, HNRNPR, HNRNPU, HSPA1, HSPA8, IGF2BP1, ILF2, ILF3, NCBP1, NCL, PABPC1, PABPC4, PABPN1, RPLP0, RPS3, RPS3A, RPS4X, RPS8, RPS9, SYNCRIP, YBX1 and untranslated mRNAs. Interacts with GTPBP1 (By similarity). Isoform 1 is a component of the APOB mRNA editosome complex. Isoform 1 interacts with APOBEC1 and A1CF. Part of a complex associated with the FOS mCRD domain and consisting of PABPC1, PAIP1, CSDE1/UNR, HNRPD and SYNCRIP. Isoform 2 interacts with HNRPR. Interacts with POLR2A hyperphosphorylated C-terminal domain. Interacts with HABP4 (By similarity). Identified in a histone pre-mRNA complex, at least composed of ERI1, LSM11, SLBP, SNRPB, SYNCRIP and YBX1. Isoform 1 and isoform 2 interact with SMN. Isoform 2 interacts through its C-terminal domain with SYT7, SYT8 and SYT9. The non-phosphorylated and phosphorylated forms are colocalized with PAIP1 in polysomes.</text>
</comment>
<comment type="subcellular location">
    <subcellularLocation>
        <location evidence="7 9">Nucleus</location>
    </subcellularLocation>
    <subcellularLocation>
        <location evidence="2">Nucleus</location>
        <location evidence="2">Nucleoplasm</location>
    </subcellularLocation>
    <subcellularLocation>
        <location evidence="9">Microsome</location>
    </subcellularLocation>
    <subcellularLocation>
        <location evidence="7">Cytoplasm</location>
    </subcellularLocation>
    <text evidence="2 7">Localized in cytoplasmic mRNP granules containing untranslated mRNAs (By similarity). Isoforms 1 and 2 are expressed predominantly in the nucleoplasm. According to PubMed:10734137, isoform 2 is predominantly found in cytoplasm. The tyrosine phosphorylated form bound to RNA is found in microsomes.</text>
</comment>
<comment type="alternative products">
    <event type="alternative splicing"/>
    <isoform>
        <id>Q7TMK9-1</id>
        <name>1</name>
        <sequence type="displayed"/>
    </isoform>
    <isoform>
        <id>Q7TMK9-2</id>
        <name>2</name>
        <sequence type="described" ref="VSP_009585 VSP_009586"/>
    </isoform>
</comment>
<comment type="tissue specificity">
    <text evidence="7 8 11">Ubiquitous. Detected in heart, brain, spleen, lung, liver, skeletal muscle, adipocytes, kidney and testis.</text>
</comment>
<comment type="developmental stage">
    <text evidence="8">Expressed in spinal cord at 14 dpc and onwards.</text>
</comment>
<comment type="domain">
    <text evidence="1">The domain containing eight Arg-Gly-Gly repeats (RGG/RXR-box) may be involved in RNA-binding and protein-protein interactions. It is methylated by PRMT1, and essential for nuclear localization (By similarity).</text>
</comment>
<comment type="PTM">
    <text evidence="9">Phosphorylated on tyrosine. The membrane-bound form found in microsomes is phosphorylated in vitro by insulin receptor tyrosine kinase (INSR). Phosphorylation is inhibited upon binding to RNA, whereas the cytoplasmic form is poorly phosphorylated.</text>
</comment>
<comment type="miscellaneous">
    <molecule>Isoform 2</molecule>
    <text evidence="16">May be due to a competing donor splice site and to an exon inclusion.</text>
</comment>
<comment type="sequence caution" evidence="16">
    <conflict type="erroneous initiation">
        <sequence resource="EMBL-CDS" id="AAH55863"/>
    </conflict>
</comment>
<comment type="sequence caution" evidence="16">
    <conflict type="erroneous initiation">
        <sequence resource="EMBL-CDS" id="AAH58807"/>
    </conflict>
</comment>
<organism>
    <name type="scientific">Mus musculus</name>
    <name type="common">Mouse</name>
    <dbReference type="NCBI Taxonomy" id="10090"/>
    <lineage>
        <taxon>Eukaryota</taxon>
        <taxon>Metazoa</taxon>
        <taxon>Chordata</taxon>
        <taxon>Craniata</taxon>
        <taxon>Vertebrata</taxon>
        <taxon>Euteleostomi</taxon>
        <taxon>Mammalia</taxon>
        <taxon>Eutheria</taxon>
        <taxon>Euarchontoglires</taxon>
        <taxon>Glires</taxon>
        <taxon>Rodentia</taxon>
        <taxon>Myomorpha</taxon>
        <taxon>Muroidea</taxon>
        <taxon>Muridae</taxon>
        <taxon>Murinae</taxon>
        <taxon>Mus</taxon>
        <taxon>Mus</taxon>
    </lineage>
</organism>
<evidence type="ECO:0000250" key="1"/>
<evidence type="ECO:0000250" key="2">
    <source>
        <dbReference type="UniProtKB" id="O43390"/>
    </source>
</evidence>
<evidence type="ECO:0000250" key="3">
    <source>
        <dbReference type="UniProtKB" id="O60506"/>
    </source>
</evidence>
<evidence type="ECO:0000255" key="4"/>
<evidence type="ECO:0000255" key="5">
    <source>
        <dbReference type="PROSITE-ProRule" id="PRU00176"/>
    </source>
</evidence>
<evidence type="ECO:0000256" key="6">
    <source>
        <dbReference type="SAM" id="MobiDB-lite"/>
    </source>
</evidence>
<evidence type="ECO:0000269" key="7">
    <source>
    </source>
</evidence>
<evidence type="ECO:0000269" key="8">
    <source>
    </source>
</evidence>
<evidence type="ECO:0000269" key="9">
    <source>
    </source>
</evidence>
<evidence type="ECO:0000269" key="10">
    <source>
    </source>
</evidence>
<evidence type="ECO:0000269" key="11">
    <source>
    </source>
</evidence>
<evidence type="ECO:0000303" key="12">
    <source>
    </source>
</evidence>
<evidence type="ECO:0000303" key="13">
    <source>
    </source>
</evidence>
<evidence type="ECO:0000303" key="14">
    <source>
    </source>
</evidence>
<evidence type="ECO:0000303" key="15">
    <source ref="5"/>
</evidence>
<evidence type="ECO:0000305" key="16"/>
<accession>Q7TMK9</accession>
<accession>O88991</accession>
<accession>Q2YDV8</accession>
<accession>Q68ED6</accession>
<accession>Q80YV6</accession>
<accession>Q8BGP1</accession>
<accession>Q8C5K6</accession>
<accession>Q8CGC2</accession>
<accession>Q91ZR0</accession>
<accession>Q99KU9</accession>
<accession>Q9QYF4</accession>